<evidence type="ECO:0000255" key="1">
    <source>
        <dbReference type="HAMAP-Rule" id="MF_01454"/>
    </source>
</evidence>
<evidence type="ECO:0000255" key="2">
    <source>
        <dbReference type="PROSITE-ProRule" id="PRU01231"/>
    </source>
</evidence>
<dbReference type="EC" id="3.6.5.-" evidence="1"/>
<dbReference type="EMBL" id="CP001087">
    <property type="protein sequence ID" value="ACN16253.1"/>
    <property type="molecule type" value="Genomic_DNA"/>
</dbReference>
<dbReference type="RefSeq" id="WP_015905015.1">
    <property type="nucleotide sequence ID" value="NC_012108.1"/>
</dbReference>
<dbReference type="SMR" id="C0QLE9"/>
<dbReference type="STRING" id="177437.HRM2_31720"/>
<dbReference type="KEGG" id="dat:HRM2_31720"/>
<dbReference type="eggNOG" id="COG0536">
    <property type="taxonomic scope" value="Bacteria"/>
</dbReference>
<dbReference type="HOGENOM" id="CLU_011747_2_0_7"/>
<dbReference type="OrthoDB" id="9807318at2"/>
<dbReference type="Proteomes" id="UP000000442">
    <property type="component" value="Chromosome"/>
</dbReference>
<dbReference type="GO" id="GO:0005737">
    <property type="term" value="C:cytoplasm"/>
    <property type="evidence" value="ECO:0007669"/>
    <property type="project" value="UniProtKB-SubCell"/>
</dbReference>
<dbReference type="GO" id="GO:0005525">
    <property type="term" value="F:GTP binding"/>
    <property type="evidence" value="ECO:0007669"/>
    <property type="project" value="UniProtKB-UniRule"/>
</dbReference>
<dbReference type="GO" id="GO:0003924">
    <property type="term" value="F:GTPase activity"/>
    <property type="evidence" value="ECO:0007669"/>
    <property type="project" value="UniProtKB-UniRule"/>
</dbReference>
<dbReference type="GO" id="GO:0000287">
    <property type="term" value="F:magnesium ion binding"/>
    <property type="evidence" value="ECO:0007669"/>
    <property type="project" value="InterPro"/>
</dbReference>
<dbReference type="GO" id="GO:0042254">
    <property type="term" value="P:ribosome biogenesis"/>
    <property type="evidence" value="ECO:0007669"/>
    <property type="project" value="UniProtKB-UniRule"/>
</dbReference>
<dbReference type="CDD" id="cd01898">
    <property type="entry name" value="Obg"/>
    <property type="match status" value="1"/>
</dbReference>
<dbReference type="FunFam" id="2.70.210.12:FF:000001">
    <property type="entry name" value="GTPase Obg"/>
    <property type="match status" value="1"/>
</dbReference>
<dbReference type="Gene3D" id="2.70.210.12">
    <property type="entry name" value="GTP1/OBG domain"/>
    <property type="match status" value="1"/>
</dbReference>
<dbReference type="Gene3D" id="3.40.50.300">
    <property type="entry name" value="P-loop containing nucleotide triphosphate hydrolases"/>
    <property type="match status" value="1"/>
</dbReference>
<dbReference type="HAMAP" id="MF_01454">
    <property type="entry name" value="GTPase_Obg"/>
    <property type="match status" value="1"/>
</dbReference>
<dbReference type="InterPro" id="IPR031167">
    <property type="entry name" value="G_OBG"/>
</dbReference>
<dbReference type="InterPro" id="IPR006073">
    <property type="entry name" value="GTP-bd"/>
</dbReference>
<dbReference type="InterPro" id="IPR014100">
    <property type="entry name" value="GTP-bd_Obg/CgtA"/>
</dbReference>
<dbReference type="InterPro" id="IPR006074">
    <property type="entry name" value="GTP1-OBG_CS"/>
</dbReference>
<dbReference type="InterPro" id="IPR006169">
    <property type="entry name" value="GTP1_OBG_dom"/>
</dbReference>
<dbReference type="InterPro" id="IPR036726">
    <property type="entry name" value="GTP1_OBG_dom_sf"/>
</dbReference>
<dbReference type="InterPro" id="IPR045086">
    <property type="entry name" value="OBG_GTPase"/>
</dbReference>
<dbReference type="InterPro" id="IPR027417">
    <property type="entry name" value="P-loop_NTPase"/>
</dbReference>
<dbReference type="InterPro" id="IPR005225">
    <property type="entry name" value="Small_GTP-bd"/>
</dbReference>
<dbReference type="NCBIfam" id="TIGR02729">
    <property type="entry name" value="Obg_CgtA"/>
    <property type="match status" value="1"/>
</dbReference>
<dbReference type="NCBIfam" id="NF008955">
    <property type="entry name" value="PRK12297.1"/>
    <property type="match status" value="1"/>
</dbReference>
<dbReference type="NCBIfam" id="NF008956">
    <property type="entry name" value="PRK12299.1"/>
    <property type="match status" value="1"/>
</dbReference>
<dbReference type="NCBIfam" id="TIGR00231">
    <property type="entry name" value="small_GTP"/>
    <property type="match status" value="1"/>
</dbReference>
<dbReference type="PANTHER" id="PTHR11702">
    <property type="entry name" value="DEVELOPMENTALLY REGULATED GTP-BINDING PROTEIN-RELATED"/>
    <property type="match status" value="1"/>
</dbReference>
<dbReference type="PANTHER" id="PTHR11702:SF31">
    <property type="entry name" value="MITOCHONDRIAL RIBOSOME-ASSOCIATED GTPASE 2"/>
    <property type="match status" value="1"/>
</dbReference>
<dbReference type="Pfam" id="PF01018">
    <property type="entry name" value="GTP1_OBG"/>
    <property type="match status" value="1"/>
</dbReference>
<dbReference type="Pfam" id="PF01926">
    <property type="entry name" value="MMR_HSR1"/>
    <property type="match status" value="1"/>
</dbReference>
<dbReference type="PIRSF" id="PIRSF002401">
    <property type="entry name" value="GTP_bd_Obg/CgtA"/>
    <property type="match status" value="1"/>
</dbReference>
<dbReference type="PRINTS" id="PR00326">
    <property type="entry name" value="GTP1OBG"/>
</dbReference>
<dbReference type="SUPFAM" id="SSF82051">
    <property type="entry name" value="Obg GTP-binding protein N-terminal domain"/>
    <property type="match status" value="1"/>
</dbReference>
<dbReference type="SUPFAM" id="SSF52540">
    <property type="entry name" value="P-loop containing nucleoside triphosphate hydrolases"/>
    <property type="match status" value="1"/>
</dbReference>
<dbReference type="PROSITE" id="PS51710">
    <property type="entry name" value="G_OBG"/>
    <property type="match status" value="1"/>
</dbReference>
<dbReference type="PROSITE" id="PS00905">
    <property type="entry name" value="GTP1_OBG"/>
    <property type="match status" value="1"/>
</dbReference>
<dbReference type="PROSITE" id="PS51883">
    <property type="entry name" value="OBG"/>
    <property type="match status" value="1"/>
</dbReference>
<gene>
    <name evidence="1" type="primary">obg</name>
    <name type="ordered locus">HRM2_31720</name>
</gene>
<feature type="chain" id="PRO_0000385884" description="GTPase Obg">
    <location>
        <begin position="1"/>
        <end position="345"/>
    </location>
</feature>
<feature type="domain" description="Obg" evidence="2">
    <location>
        <begin position="1"/>
        <end position="159"/>
    </location>
</feature>
<feature type="domain" description="OBG-type G" evidence="1">
    <location>
        <begin position="160"/>
        <end position="329"/>
    </location>
</feature>
<feature type="binding site" evidence="1">
    <location>
        <begin position="166"/>
        <end position="173"/>
    </location>
    <ligand>
        <name>GTP</name>
        <dbReference type="ChEBI" id="CHEBI:37565"/>
    </ligand>
</feature>
<feature type="binding site" evidence="1">
    <location>
        <position position="173"/>
    </location>
    <ligand>
        <name>Mg(2+)</name>
        <dbReference type="ChEBI" id="CHEBI:18420"/>
    </ligand>
</feature>
<feature type="binding site" evidence="1">
    <location>
        <begin position="191"/>
        <end position="195"/>
    </location>
    <ligand>
        <name>GTP</name>
        <dbReference type="ChEBI" id="CHEBI:37565"/>
    </ligand>
</feature>
<feature type="binding site" evidence="1">
    <location>
        <position position="193"/>
    </location>
    <ligand>
        <name>Mg(2+)</name>
        <dbReference type="ChEBI" id="CHEBI:18420"/>
    </ligand>
</feature>
<feature type="binding site" evidence="1">
    <location>
        <begin position="213"/>
        <end position="216"/>
    </location>
    <ligand>
        <name>GTP</name>
        <dbReference type="ChEBI" id="CHEBI:37565"/>
    </ligand>
</feature>
<feature type="binding site" evidence="1">
    <location>
        <begin position="283"/>
        <end position="286"/>
    </location>
    <ligand>
        <name>GTP</name>
        <dbReference type="ChEBI" id="CHEBI:37565"/>
    </ligand>
</feature>
<feature type="binding site" evidence="1">
    <location>
        <begin position="310"/>
        <end position="312"/>
    </location>
    <ligand>
        <name>GTP</name>
        <dbReference type="ChEBI" id="CHEBI:37565"/>
    </ligand>
</feature>
<protein>
    <recommendedName>
        <fullName evidence="1">GTPase Obg</fullName>
        <ecNumber evidence="1">3.6.5.-</ecNumber>
    </recommendedName>
    <alternativeName>
        <fullName evidence="1">GTP-binding protein Obg</fullName>
    </alternativeName>
</protein>
<organism>
    <name type="scientific">Desulforapulum autotrophicum (strain ATCC 43914 / DSM 3382 / VKM B-1955 / HRM2)</name>
    <name type="common">Desulfobacterium autotrophicum</name>
    <dbReference type="NCBI Taxonomy" id="177437"/>
    <lineage>
        <taxon>Bacteria</taxon>
        <taxon>Pseudomonadati</taxon>
        <taxon>Thermodesulfobacteriota</taxon>
        <taxon>Desulfobacteria</taxon>
        <taxon>Desulfobacterales</taxon>
        <taxon>Desulfobacteraceae</taxon>
        <taxon>Desulforapulum</taxon>
    </lineage>
</organism>
<comment type="function">
    <text evidence="1">An essential GTPase which binds GTP, GDP and possibly (p)ppGpp with moderate affinity, with high nucleotide exchange rates and a fairly low GTP hydrolysis rate. Plays a role in control of the cell cycle, stress response, ribosome biogenesis and in those bacteria that undergo differentiation, in morphogenesis control.</text>
</comment>
<comment type="cofactor">
    <cofactor evidence="1">
        <name>Mg(2+)</name>
        <dbReference type="ChEBI" id="CHEBI:18420"/>
    </cofactor>
</comment>
<comment type="subunit">
    <text evidence="1">Monomer.</text>
</comment>
<comment type="subcellular location">
    <subcellularLocation>
        <location evidence="1">Cytoplasm</location>
    </subcellularLocation>
</comment>
<comment type="similarity">
    <text evidence="1">Belongs to the TRAFAC class OBG-HflX-like GTPase superfamily. OBG GTPase family.</text>
</comment>
<accession>C0QLE9</accession>
<reference key="1">
    <citation type="journal article" date="2009" name="Environ. Microbiol.">
        <title>Genome sequence of Desulfobacterium autotrophicum HRM2, a marine sulfate reducer oxidizing organic carbon completely to carbon dioxide.</title>
        <authorList>
            <person name="Strittmatter A.W."/>
            <person name="Liesegang H."/>
            <person name="Rabus R."/>
            <person name="Decker I."/>
            <person name="Amann J."/>
            <person name="Andres S."/>
            <person name="Henne A."/>
            <person name="Fricke W.F."/>
            <person name="Martinez-Arias R."/>
            <person name="Bartels D."/>
            <person name="Goesmann A."/>
            <person name="Krause L."/>
            <person name="Puehler A."/>
            <person name="Klenk H.P."/>
            <person name="Richter M."/>
            <person name="Schuler M."/>
            <person name="Gloeckner F.O."/>
            <person name="Meyerdierks A."/>
            <person name="Gottschalk G."/>
            <person name="Amann R."/>
        </authorList>
    </citation>
    <scope>NUCLEOTIDE SEQUENCE [LARGE SCALE GENOMIC DNA]</scope>
    <source>
        <strain>ATCC 43914 / DSM 3382 / VKM B-1955 / HRM2</strain>
    </source>
</reference>
<sequence>MRFIDEASITVISGKGGPGCVSFRRERFIERGGPNGGDGGKGGSVIFETDPAKRTLFDLRRQKIIRAKNGMPGLGSNKHGKNGVDLIIPVPPGTLVTDQETGAVLFDLTEPGTRITIAKGGRGGQGNKRFATSTHKAPRFAQPGMPGEEFHLKLELKLLADVGIVGLPNAGKSTLISKISSARPRIADYPFTTLTPSLGMVIPDFGEPFAVADIPGIIEGAHEGTGLGIQFLKHVERTGILIHLIDVSQIEPDNPLDAFNLINTELSLYSATLAKKPQLVVLNKIDLTGSMEKVEQFKKAYGTGELLTLSAATGEGTAKLIQILARQIAEHKPLERKSETDHGNK</sequence>
<name>OBG_DESAH</name>
<keyword id="KW-0963">Cytoplasm</keyword>
<keyword id="KW-0342">GTP-binding</keyword>
<keyword id="KW-0378">Hydrolase</keyword>
<keyword id="KW-0460">Magnesium</keyword>
<keyword id="KW-0479">Metal-binding</keyword>
<keyword id="KW-0547">Nucleotide-binding</keyword>
<keyword id="KW-1185">Reference proteome</keyword>
<proteinExistence type="inferred from homology"/>